<name>UREE_BURM7</name>
<sequence length="209" mass="22565">MRTIDKRIAPNVRLAATLVARAPALTLAYDARCKSRLAATLDTGEDVALVLPRGTVLRDGDVLVADDGALVRVAAAHEAVLLVRAPDALTLTRAAYHLGNRHTPVEVGAGCLKLEYDPALADMLTRLGATVERASAPFQPEAGAYGGGHRHGHDATFAEDYALAQQVFDEHHGHSHSHSHDHDHDHDHDHDHDHQHGPSCSHGHHHGHR</sequence>
<gene>
    <name evidence="1" type="primary">ureE</name>
    <name type="ordered locus">BMA10247_2058</name>
</gene>
<proteinExistence type="inferred from homology"/>
<reference key="1">
    <citation type="journal article" date="2010" name="Genome Biol. Evol.">
        <title>Continuing evolution of Burkholderia mallei through genome reduction and large-scale rearrangements.</title>
        <authorList>
            <person name="Losada L."/>
            <person name="Ronning C.M."/>
            <person name="DeShazer D."/>
            <person name="Woods D."/>
            <person name="Fedorova N."/>
            <person name="Kim H.S."/>
            <person name="Shabalina S.A."/>
            <person name="Pearson T.R."/>
            <person name="Brinkac L."/>
            <person name="Tan P."/>
            <person name="Nandi T."/>
            <person name="Crabtree J."/>
            <person name="Badger J."/>
            <person name="Beckstrom-Sternberg S."/>
            <person name="Saqib M."/>
            <person name="Schutzer S.E."/>
            <person name="Keim P."/>
            <person name="Nierman W.C."/>
        </authorList>
    </citation>
    <scope>NUCLEOTIDE SEQUENCE [LARGE SCALE GENOMIC DNA]</scope>
    <source>
        <strain>NCTC 10247</strain>
    </source>
</reference>
<evidence type="ECO:0000255" key="1">
    <source>
        <dbReference type="HAMAP-Rule" id="MF_00822"/>
    </source>
</evidence>
<evidence type="ECO:0000256" key="2">
    <source>
        <dbReference type="SAM" id="MobiDB-lite"/>
    </source>
</evidence>
<organism>
    <name type="scientific">Burkholderia mallei (strain NCTC 10247)</name>
    <dbReference type="NCBI Taxonomy" id="320389"/>
    <lineage>
        <taxon>Bacteria</taxon>
        <taxon>Pseudomonadati</taxon>
        <taxon>Pseudomonadota</taxon>
        <taxon>Betaproteobacteria</taxon>
        <taxon>Burkholderiales</taxon>
        <taxon>Burkholderiaceae</taxon>
        <taxon>Burkholderia</taxon>
        <taxon>pseudomallei group</taxon>
    </lineage>
</organism>
<feature type="chain" id="PRO_1000083877" description="Urease accessory protein UreE">
    <location>
        <begin position="1"/>
        <end position="209"/>
    </location>
</feature>
<feature type="region of interest" description="Disordered" evidence="2">
    <location>
        <begin position="170"/>
        <end position="209"/>
    </location>
</feature>
<feature type="compositionally biased region" description="Basic and acidic residues" evidence="2">
    <location>
        <begin position="170"/>
        <end position="196"/>
    </location>
</feature>
<keyword id="KW-0143">Chaperone</keyword>
<keyword id="KW-0963">Cytoplasm</keyword>
<keyword id="KW-0533">Nickel</keyword>
<keyword id="KW-0996">Nickel insertion</keyword>
<accession>A3MMV3</accession>
<dbReference type="EMBL" id="CP000548">
    <property type="protein sequence ID" value="ABO06368.1"/>
    <property type="molecule type" value="Genomic_DNA"/>
</dbReference>
<dbReference type="RefSeq" id="WP_011857918.1">
    <property type="nucleotide sequence ID" value="NC_009080.1"/>
</dbReference>
<dbReference type="SMR" id="A3MMV3"/>
<dbReference type="KEGG" id="bmaz:BM44_1169"/>
<dbReference type="KEGG" id="bmn:BMA10247_2058"/>
<dbReference type="PATRIC" id="fig|320389.8.peg.1305"/>
<dbReference type="GO" id="GO:0005737">
    <property type="term" value="C:cytoplasm"/>
    <property type="evidence" value="ECO:0007669"/>
    <property type="project" value="UniProtKB-SubCell"/>
</dbReference>
<dbReference type="GO" id="GO:0016151">
    <property type="term" value="F:nickel cation binding"/>
    <property type="evidence" value="ECO:0007669"/>
    <property type="project" value="UniProtKB-UniRule"/>
</dbReference>
<dbReference type="GO" id="GO:0051082">
    <property type="term" value="F:unfolded protein binding"/>
    <property type="evidence" value="ECO:0007669"/>
    <property type="project" value="UniProtKB-UniRule"/>
</dbReference>
<dbReference type="GO" id="GO:0006457">
    <property type="term" value="P:protein folding"/>
    <property type="evidence" value="ECO:0007669"/>
    <property type="project" value="InterPro"/>
</dbReference>
<dbReference type="GO" id="GO:0065003">
    <property type="term" value="P:protein-containing complex assembly"/>
    <property type="evidence" value="ECO:0007669"/>
    <property type="project" value="InterPro"/>
</dbReference>
<dbReference type="GO" id="GO:0019627">
    <property type="term" value="P:urea metabolic process"/>
    <property type="evidence" value="ECO:0007669"/>
    <property type="project" value="InterPro"/>
</dbReference>
<dbReference type="CDD" id="cd00571">
    <property type="entry name" value="UreE"/>
    <property type="match status" value="1"/>
</dbReference>
<dbReference type="Gene3D" id="2.60.260.20">
    <property type="entry name" value="Urease metallochaperone UreE, N-terminal domain"/>
    <property type="match status" value="1"/>
</dbReference>
<dbReference type="Gene3D" id="3.30.70.790">
    <property type="entry name" value="UreE, C-terminal domain"/>
    <property type="match status" value="1"/>
</dbReference>
<dbReference type="HAMAP" id="MF_00822">
    <property type="entry name" value="UreE"/>
    <property type="match status" value="1"/>
</dbReference>
<dbReference type="InterPro" id="IPR012406">
    <property type="entry name" value="UreE"/>
</dbReference>
<dbReference type="InterPro" id="IPR007864">
    <property type="entry name" value="UreE_C_dom"/>
</dbReference>
<dbReference type="InterPro" id="IPR004029">
    <property type="entry name" value="UreE_N"/>
</dbReference>
<dbReference type="InterPro" id="IPR036118">
    <property type="entry name" value="UreE_N_sf"/>
</dbReference>
<dbReference type="NCBIfam" id="NF009751">
    <property type="entry name" value="PRK13261.1-1"/>
    <property type="match status" value="1"/>
</dbReference>
<dbReference type="NCBIfam" id="NF009762">
    <property type="entry name" value="PRK13263.1"/>
    <property type="match status" value="1"/>
</dbReference>
<dbReference type="Pfam" id="PF05194">
    <property type="entry name" value="UreE_C"/>
    <property type="match status" value="1"/>
</dbReference>
<dbReference type="Pfam" id="PF02814">
    <property type="entry name" value="UreE_N"/>
    <property type="match status" value="1"/>
</dbReference>
<dbReference type="SMART" id="SM00988">
    <property type="entry name" value="UreE_N"/>
    <property type="match status" value="1"/>
</dbReference>
<dbReference type="SUPFAM" id="SSF69737">
    <property type="entry name" value="Urease metallochaperone UreE, C-terminal domain"/>
    <property type="match status" value="1"/>
</dbReference>
<dbReference type="SUPFAM" id="SSF69287">
    <property type="entry name" value="Urease metallochaperone UreE, N-terminal domain"/>
    <property type="match status" value="1"/>
</dbReference>
<comment type="function">
    <text evidence="1">Involved in urease metallocenter assembly. Binds nickel. Probably functions as a nickel donor during metallocenter assembly.</text>
</comment>
<comment type="subcellular location">
    <subcellularLocation>
        <location evidence="1">Cytoplasm</location>
    </subcellularLocation>
</comment>
<comment type="similarity">
    <text evidence="1">Belongs to the UreE family.</text>
</comment>
<protein>
    <recommendedName>
        <fullName evidence="1">Urease accessory protein UreE</fullName>
    </recommendedName>
</protein>